<sequence>MTALKNDRFLRALLKQPVDVTPVWMMRQAGRYLPEYRASRAKAGDFMSLCMNPQFACEVTLQPLDRYPLDAAILFSDILTIPDAMGQGLYFETGEGPRFKKVISTLADIEALPIPDPQKDLGYVMDAVSTIRRELNGRVPLIGFSGSPWTLATYMVEGGSSKDFRKTKAMAYDNPQALHLLLDKLAQSVTSYLNGQILAGAQAVQIFDTWGGNLSAAAYQEFSLAYMRKIVSGLIREHEGRKVPVILFTKNGGLWLESIAEAGADALGLDWTCEIGDARRRVGDKVALQGNMDPTVLYAKPEAIRKEVARILASYGKGSGHVFNLGHGITPEVDPEHAGVFINAVHELSAQYHQ</sequence>
<reference key="1">
    <citation type="journal article" date="2006" name="Nat. Biotechnol.">
        <title>Complete genome sequence of the entomopathogenic and metabolically versatile soil bacterium Pseudomonas entomophila.</title>
        <authorList>
            <person name="Vodovar N."/>
            <person name="Vallenet D."/>
            <person name="Cruveiller S."/>
            <person name="Rouy Z."/>
            <person name="Barbe V."/>
            <person name="Acosta C."/>
            <person name="Cattolico L."/>
            <person name="Jubin C."/>
            <person name="Lajus A."/>
            <person name="Segurens B."/>
            <person name="Vacherie B."/>
            <person name="Wincker P."/>
            <person name="Weissenbach J."/>
            <person name="Lemaitre B."/>
            <person name="Medigue C."/>
            <person name="Boccard F."/>
        </authorList>
    </citation>
    <scope>NUCLEOTIDE SEQUENCE [LARGE SCALE GENOMIC DNA]</scope>
    <source>
        <strain>L48</strain>
    </source>
</reference>
<protein>
    <recommendedName>
        <fullName evidence="1">Uroporphyrinogen decarboxylase</fullName>
        <shortName evidence="1">UPD</shortName>
        <shortName evidence="1">URO-D</shortName>
        <ecNumber evidence="1">4.1.1.37</ecNumber>
    </recommendedName>
</protein>
<comment type="function">
    <text evidence="1">Catalyzes the decarboxylation of four acetate groups of uroporphyrinogen-III to yield coproporphyrinogen-III.</text>
</comment>
<comment type="catalytic activity">
    <reaction evidence="1">
        <text>uroporphyrinogen III + 4 H(+) = coproporphyrinogen III + 4 CO2</text>
        <dbReference type="Rhea" id="RHEA:19865"/>
        <dbReference type="ChEBI" id="CHEBI:15378"/>
        <dbReference type="ChEBI" id="CHEBI:16526"/>
        <dbReference type="ChEBI" id="CHEBI:57308"/>
        <dbReference type="ChEBI" id="CHEBI:57309"/>
        <dbReference type="EC" id="4.1.1.37"/>
    </reaction>
</comment>
<comment type="pathway">
    <text evidence="1">Porphyrin-containing compound metabolism; protoporphyrin-IX biosynthesis; coproporphyrinogen-III from 5-aminolevulinate: step 4/4.</text>
</comment>
<comment type="subunit">
    <text evidence="1">Homodimer.</text>
</comment>
<comment type="subcellular location">
    <subcellularLocation>
        <location evidence="1">Cytoplasm</location>
    </subcellularLocation>
</comment>
<comment type="similarity">
    <text evidence="1">Belongs to the uroporphyrinogen decarboxylase family.</text>
</comment>
<organism>
    <name type="scientific">Pseudomonas entomophila (strain L48)</name>
    <dbReference type="NCBI Taxonomy" id="384676"/>
    <lineage>
        <taxon>Bacteria</taxon>
        <taxon>Pseudomonadati</taxon>
        <taxon>Pseudomonadota</taxon>
        <taxon>Gammaproteobacteria</taxon>
        <taxon>Pseudomonadales</taxon>
        <taxon>Pseudomonadaceae</taxon>
        <taxon>Pseudomonas</taxon>
    </lineage>
</organism>
<proteinExistence type="inferred from homology"/>
<dbReference type="EC" id="4.1.1.37" evidence="1"/>
<dbReference type="EMBL" id="CT573326">
    <property type="protein sequence ID" value="CAK13299.1"/>
    <property type="molecule type" value="Genomic_DNA"/>
</dbReference>
<dbReference type="RefSeq" id="WP_011531759.1">
    <property type="nucleotide sequence ID" value="NC_008027.1"/>
</dbReference>
<dbReference type="SMR" id="Q1IGA3"/>
<dbReference type="STRING" id="384676.PSEEN0339"/>
<dbReference type="GeneID" id="32803680"/>
<dbReference type="KEGG" id="pen:PSEEN0339"/>
<dbReference type="eggNOG" id="COG0407">
    <property type="taxonomic scope" value="Bacteria"/>
</dbReference>
<dbReference type="HOGENOM" id="CLU_040933_0_0_6"/>
<dbReference type="OrthoDB" id="9806656at2"/>
<dbReference type="UniPathway" id="UPA00251">
    <property type="reaction ID" value="UER00321"/>
</dbReference>
<dbReference type="Proteomes" id="UP000000658">
    <property type="component" value="Chromosome"/>
</dbReference>
<dbReference type="GO" id="GO:0005829">
    <property type="term" value="C:cytosol"/>
    <property type="evidence" value="ECO:0007669"/>
    <property type="project" value="TreeGrafter"/>
</dbReference>
<dbReference type="GO" id="GO:0004853">
    <property type="term" value="F:uroporphyrinogen decarboxylase activity"/>
    <property type="evidence" value="ECO:0007669"/>
    <property type="project" value="UniProtKB-UniRule"/>
</dbReference>
<dbReference type="GO" id="GO:0019353">
    <property type="term" value="P:protoporphyrinogen IX biosynthetic process from glutamate"/>
    <property type="evidence" value="ECO:0007669"/>
    <property type="project" value="TreeGrafter"/>
</dbReference>
<dbReference type="CDD" id="cd00717">
    <property type="entry name" value="URO-D"/>
    <property type="match status" value="1"/>
</dbReference>
<dbReference type="FunFam" id="3.20.20.210:FF:000001">
    <property type="entry name" value="Uroporphyrinogen decarboxylase"/>
    <property type="match status" value="1"/>
</dbReference>
<dbReference type="Gene3D" id="3.20.20.210">
    <property type="match status" value="1"/>
</dbReference>
<dbReference type="HAMAP" id="MF_00218">
    <property type="entry name" value="URO_D"/>
    <property type="match status" value="1"/>
</dbReference>
<dbReference type="InterPro" id="IPR038071">
    <property type="entry name" value="UROD/MetE-like_sf"/>
</dbReference>
<dbReference type="InterPro" id="IPR006361">
    <property type="entry name" value="Uroporphyrinogen_deCO2ase_HemE"/>
</dbReference>
<dbReference type="InterPro" id="IPR000257">
    <property type="entry name" value="Uroporphyrinogen_deCOase"/>
</dbReference>
<dbReference type="NCBIfam" id="TIGR01464">
    <property type="entry name" value="hemE"/>
    <property type="match status" value="1"/>
</dbReference>
<dbReference type="PANTHER" id="PTHR21091">
    <property type="entry name" value="METHYLTETRAHYDROFOLATE:HOMOCYSTEINE METHYLTRANSFERASE RELATED"/>
    <property type="match status" value="1"/>
</dbReference>
<dbReference type="PANTHER" id="PTHR21091:SF169">
    <property type="entry name" value="UROPORPHYRINOGEN DECARBOXYLASE"/>
    <property type="match status" value="1"/>
</dbReference>
<dbReference type="Pfam" id="PF01208">
    <property type="entry name" value="URO-D"/>
    <property type="match status" value="1"/>
</dbReference>
<dbReference type="SUPFAM" id="SSF51726">
    <property type="entry name" value="UROD/MetE-like"/>
    <property type="match status" value="1"/>
</dbReference>
<dbReference type="PROSITE" id="PS00906">
    <property type="entry name" value="UROD_1"/>
    <property type="match status" value="1"/>
</dbReference>
<dbReference type="PROSITE" id="PS00907">
    <property type="entry name" value="UROD_2"/>
    <property type="match status" value="1"/>
</dbReference>
<name>DCUP_PSEE4</name>
<evidence type="ECO:0000255" key="1">
    <source>
        <dbReference type="HAMAP-Rule" id="MF_00218"/>
    </source>
</evidence>
<gene>
    <name evidence="1" type="primary">hemE</name>
    <name type="ordered locus">PSEEN0339</name>
</gene>
<feature type="chain" id="PRO_1000023947" description="Uroporphyrinogen decarboxylase">
    <location>
        <begin position="1"/>
        <end position="354"/>
    </location>
</feature>
<feature type="binding site" evidence="1">
    <location>
        <begin position="27"/>
        <end position="31"/>
    </location>
    <ligand>
        <name>substrate</name>
    </ligand>
</feature>
<feature type="binding site" evidence="1">
    <location>
        <position position="77"/>
    </location>
    <ligand>
        <name>substrate</name>
    </ligand>
</feature>
<feature type="binding site" evidence="1">
    <location>
        <position position="154"/>
    </location>
    <ligand>
        <name>substrate</name>
    </ligand>
</feature>
<feature type="binding site" evidence="1">
    <location>
        <position position="209"/>
    </location>
    <ligand>
        <name>substrate</name>
    </ligand>
</feature>
<feature type="binding site" evidence="1">
    <location>
        <position position="327"/>
    </location>
    <ligand>
        <name>substrate</name>
    </ligand>
</feature>
<feature type="site" description="Transition state stabilizer" evidence="1">
    <location>
        <position position="77"/>
    </location>
</feature>
<keyword id="KW-0963">Cytoplasm</keyword>
<keyword id="KW-0210">Decarboxylase</keyword>
<keyword id="KW-0456">Lyase</keyword>
<keyword id="KW-0627">Porphyrin biosynthesis</keyword>
<accession>Q1IGA3</accession>